<proteinExistence type="inferred from homology"/>
<comment type="function">
    <text evidence="1">Component of the proteasome core, a large protease complex with broad specificity involved in protein degradation.</text>
</comment>
<comment type="catalytic activity">
    <reaction evidence="1">
        <text>Cleavage of peptide bonds with very broad specificity.</text>
        <dbReference type="EC" id="3.4.25.1"/>
    </reaction>
</comment>
<comment type="activity regulation">
    <text evidence="1">The formation of the proteasomal ATPase ARC-20S proteasome complex, likely via the docking of the C-termini of ARC into the intersubunit pockets in the alpha-rings, may trigger opening of the gate for substrate entry. Interconversion between the open-gate and close-gate conformations leads to a dynamic regulation of the 20S proteasome proteolysis activity.</text>
</comment>
<comment type="pathway">
    <text evidence="1">Protein degradation; proteasomal Pup-dependent pathway.</text>
</comment>
<comment type="subunit">
    <text evidence="1">The 20S proteasome core is composed of 14 alpha and 14 beta subunits that assemble into four stacked heptameric rings, resulting in a barrel-shaped structure. The two inner rings, each composed of seven catalytic beta subunits, are sandwiched by two outer rings, each composed of seven alpha subunits. The catalytic chamber with the active sites is on the inside of the barrel. Has a gated structure, the ends of the cylinder being occluded by the N-termini of the alpha-subunits. Is capped by the proteasome-associated ATPase, ARC.</text>
</comment>
<comment type="subcellular location">
    <subcellularLocation>
        <location evidence="1">Cytoplasm</location>
    </subcellularLocation>
</comment>
<comment type="similarity">
    <text evidence="1">Belongs to the peptidase T1B family.</text>
</comment>
<dbReference type="EC" id="3.4.25.1" evidence="1"/>
<dbReference type="EMBL" id="CP000454">
    <property type="protein sequence ID" value="ABK03556.1"/>
    <property type="molecule type" value="Genomic_DNA"/>
</dbReference>
<dbReference type="RefSeq" id="WP_011692022.1">
    <property type="nucleotide sequence ID" value="NC_008541.1"/>
</dbReference>
<dbReference type="SMR" id="A0JWY6"/>
<dbReference type="STRING" id="290399.Arth_2176"/>
<dbReference type="MEROPS" id="T01.005"/>
<dbReference type="KEGG" id="art:Arth_2176"/>
<dbReference type="eggNOG" id="COG0638">
    <property type="taxonomic scope" value="Bacteria"/>
</dbReference>
<dbReference type="HOGENOM" id="CLU_035750_2_0_11"/>
<dbReference type="OrthoDB" id="5174038at2"/>
<dbReference type="UniPathway" id="UPA00997"/>
<dbReference type="Proteomes" id="UP000000754">
    <property type="component" value="Chromosome"/>
</dbReference>
<dbReference type="GO" id="GO:0005737">
    <property type="term" value="C:cytoplasm"/>
    <property type="evidence" value="ECO:0007669"/>
    <property type="project" value="UniProtKB-SubCell"/>
</dbReference>
<dbReference type="GO" id="GO:0019774">
    <property type="term" value="C:proteasome core complex, beta-subunit complex"/>
    <property type="evidence" value="ECO:0007669"/>
    <property type="project" value="UniProtKB-UniRule"/>
</dbReference>
<dbReference type="GO" id="GO:0004298">
    <property type="term" value="F:threonine-type endopeptidase activity"/>
    <property type="evidence" value="ECO:0007669"/>
    <property type="project" value="UniProtKB-UniRule"/>
</dbReference>
<dbReference type="GO" id="GO:0019941">
    <property type="term" value="P:modification-dependent protein catabolic process"/>
    <property type="evidence" value="ECO:0007669"/>
    <property type="project" value="UniProtKB-UniRule"/>
</dbReference>
<dbReference type="GO" id="GO:0010498">
    <property type="term" value="P:proteasomal protein catabolic process"/>
    <property type="evidence" value="ECO:0007669"/>
    <property type="project" value="UniProtKB-UniRule"/>
</dbReference>
<dbReference type="CDD" id="cd01906">
    <property type="entry name" value="proteasome_protease_HslV"/>
    <property type="match status" value="1"/>
</dbReference>
<dbReference type="Gene3D" id="3.60.20.10">
    <property type="entry name" value="Glutamine Phosphoribosylpyrophosphate, subunit 1, domain 1"/>
    <property type="match status" value="1"/>
</dbReference>
<dbReference type="HAMAP" id="MF_02113_B">
    <property type="entry name" value="Proteasome_B_B"/>
    <property type="match status" value="1"/>
</dbReference>
<dbReference type="InterPro" id="IPR029055">
    <property type="entry name" value="Ntn_hydrolases_N"/>
</dbReference>
<dbReference type="InterPro" id="IPR000243">
    <property type="entry name" value="Pept_T1A_subB"/>
</dbReference>
<dbReference type="InterPro" id="IPR001353">
    <property type="entry name" value="Proteasome_sua/b"/>
</dbReference>
<dbReference type="InterPro" id="IPR023333">
    <property type="entry name" value="Proteasome_suB-type"/>
</dbReference>
<dbReference type="InterPro" id="IPR022483">
    <property type="entry name" value="PSB_actinobac"/>
</dbReference>
<dbReference type="NCBIfam" id="TIGR03690">
    <property type="entry name" value="20S_bact_beta"/>
    <property type="match status" value="1"/>
</dbReference>
<dbReference type="PANTHER" id="PTHR32194:SF0">
    <property type="entry name" value="ATP-DEPENDENT PROTEASE SUBUNIT HSLV"/>
    <property type="match status" value="1"/>
</dbReference>
<dbReference type="PANTHER" id="PTHR32194">
    <property type="entry name" value="METALLOPROTEASE TLDD"/>
    <property type="match status" value="1"/>
</dbReference>
<dbReference type="Pfam" id="PF00227">
    <property type="entry name" value="Proteasome"/>
    <property type="match status" value="1"/>
</dbReference>
<dbReference type="PRINTS" id="PR00141">
    <property type="entry name" value="PROTEASOME"/>
</dbReference>
<dbReference type="SUPFAM" id="SSF56235">
    <property type="entry name" value="N-terminal nucleophile aminohydrolases (Ntn hydrolases)"/>
    <property type="match status" value="1"/>
</dbReference>
<dbReference type="PROSITE" id="PS51476">
    <property type="entry name" value="PROTEASOME_BETA_2"/>
    <property type="match status" value="1"/>
</dbReference>
<organism>
    <name type="scientific">Arthrobacter sp. (strain FB24)</name>
    <dbReference type="NCBI Taxonomy" id="290399"/>
    <lineage>
        <taxon>Bacteria</taxon>
        <taxon>Bacillati</taxon>
        <taxon>Actinomycetota</taxon>
        <taxon>Actinomycetes</taxon>
        <taxon>Micrococcales</taxon>
        <taxon>Micrococcaceae</taxon>
        <taxon>Arthrobacter</taxon>
    </lineage>
</organism>
<feature type="propeptide" id="PRO_0000397498" description="Removed in mature form; by autocatalysis" evidence="1">
    <location>
        <begin position="1"/>
        <end position="52"/>
    </location>
</feature>
<feature type="chain" id="PRO_0000397499" description="Proteasome subunit beta">
    <location>
        <begin position="53"/>
        <end position="275"/>
    </location>
</feature>
<feature type="active site" description="Nucleophile" evidence="1">
    <location>
        <position position="53"/>
    </location>
</feature>
<name>PSB_ARTS2</name>
<reference key="1">
    <citation type="journal article" date="2013" name="Stand. Genomic Sci.">
        <title>Complete genome sequence of Arthrobacter sp. strain FB24.</title>
        <authorList>
            <person name="Nakatsu C.H."/>
            <person name="Barabote R."/>
            <person name="Thompson S."/>
            <person name="Bruce D."/>
            <person name="Detter C."/>
            <person name="Brettin T."/>
            <person name="Han C."/>
            <person name="Beasley F."/>
            <person name="Chen W."/>
            <person name="Konopka A."/>
            <person name="Xie G."/>
        </authorList>
    </citation>
    <scope>NUCLEOTIDE SEQUENCE [LARGE SCALE GENOMIC DNA]</scope>
    <source>
        <strain>FB24</strain>
    </source>
</reference>
<sequence length="275" mass="29219">MQDTTANQVAANATSSFTEHLQRNRPGLLPYNQPFPAALTGAGSQPLQVPHATTIVSLTYGGGVLMAGDRRATMGNVIASRHIEKVFPADSYSVLGIAGTAGIAIDLTRLFQVELEHYEKIEGTLLSLEGKANRLGAMIRGNLPMAMQGLAVVPLFAGFDLPVGIGRLFSYDVTGGRYEEKEHHAVGSGSVFARGALKKLWRPGLTAEEAVAVAVESLYDAADDDSATGGPDPVRQLWPVVYTVERSGARRIPDHDLASVAGAIIEARTTARREA</sequence>
<protein>
    <recommendedName>
        <fullName evidence="1">Proteasome subunit beta</fullName>
        <ecNumber evidence="1">3.4.25.1</ecNumber>
    </recommendedName>
    <alternativeName>
        <fullName evidence="1">20S proteasome beta subunit</fullName>
    </alternativeName>
    <alternativeName>
        <fullName evidence="1">Proteasome core protein PrcB</fullName>
    </alternativeName>
</protein>
<keyword id="KW-0068">Autocatalytic cleavage</keyword>
<keyword id="KW-0963">Cytoplasm</keyword>
<keyword id="KW-0378">Hydrolase</keyword>
<keyword id="KW-0645">Protease</keyword>
<keyword id="KW-0647">Proteasome</keyword>
<keyword id="KW-1185">Reference proteome</keyword>
<keyword id="KW-0888">Threonine protease</keyword>
<keyword id="KW-0865">Zymogen</keyword>
<evidence type="ECO:0000255" key="1">
    <source>
        <dbReference type="HAMAP-Rule" id="MF_02113"/>
    </source>
</evidence>
<accession>A0JWY6</accession>
<gene>
    <name evidence="1" type="primary">prcB</name>
    <name type="ordered locus">Arth_2176</name>
</gene>